<name>FDL15_ARATH</name>
<sequence length="438" mass="50383">MSCSKGLSQSLKEDRISQLPDPLLTQILNLLPTEEAVKTSVLSTRWRTLWLWVPNLELSFSKFPCFNAFLSFGNLFFDSDRASCVESLKLYLDGNDASYLKPWVDALVKRKIQRLYVRRTLGGYSHVMPLSLYVCDSLVSLRLYRLSLVDAEFVSLPCLKILRLKDIVFHNETTFERLVSSCPVLEELKIDVVWNDGNVYKVHSRSLKRFCFRSSSLRFDESVPGVVVDAPLLCCLIIDDSVSESFVVTDLESNAKFDISLCFRLWRFDEAKRSIINMFLAWISRVRDMKICAHTFKLIHRYSESSPLPRFGYMSSLYVTLNASELEWFPIFLRSSPNLKSLILERSGSSHQLSRKAMERVSMSSVPECLLTSLEFVEFKAPICGLGPEMMLVWYFLKNSPTLKKLTLPLKSHSTKDDFFKKLLEIPRCSTECEIVIL</sequence>
<accession>Q9SJ32</accession>
<proteinExistence type="uncertain"/>
<protein>
    <recommendedName>
        <fullName>Putative F-box/FBD/LRR-repeat protein At2g05300</fullName>
    </recommendedName>
</protein>
<organism>
    <name type="scientific">Arabidopsis thaliana</name>
    <name type="common">Mouse-ear cress</name>
    <dbReference type="NCBI Taxonomy" id="3702"/>
    <lineage>
        <taxon>Eukaryota</taxon>
        <taxon>Viridiplantae</taxon>
        <taxon>Streptophyta</taxon>
        <taxon>Embryophyta</taxon>
        <taxon>Tracheophyta</taxon>
        <taxon>Spermatophyta</taxon>
        <taxon>Magnoliopsida</taxon>
        <taxon>eudicotyledons</taxon>
        <taxon>Gunneridae</taxon>
        <taxon>Pentapetalae</taxon>
        <taxon>rosids</taxon>
        <taxon>malvids</taxon>
        <taxon>Brassicales</taxon>
        <taxon>Brassicaceae</taxon>
        <taxon>Camelineae</taxon>
        <taxon>Arabidopsis</taxon>
    </lineage>
</organism>
<keyword id="KW-0433">Leucine-rich repeat</keyword>
<keyword id="KW-1185">Reference proteome</keyword>
<keyword id="KW-0677">Repeat</keyword>
<feature type="chain" id="PRO_0000283108" description="Putative F-box/FBD/LRR-repeat protein At2g05300">
    <location>
        <begin position="1"/>
        <end position="438"/>
    </location>
</feature>
<feature type="domain" description="F-box" evidence="1">
    <location>
        <begin position="13"/>
        <end position="59"/>
    </location>
</feature>
<feature type="repeat" description="LRR 1">
    <location>
        <begin position="135"/>
        <end position="166"/>
    </location>
</feature>
<feature type="repeat" description="LRR 2">
    <location>
        <begin position="167"/>
        <end position="192"/>
    </location>
</feature>
<feature type="repeat" description="LRR 3">
    <location>
        <begin position="235"/>
        <end position="261"/>
    </location>
</feature>
<feature type="repeat" description="LRR 4">
    <location>
        <begin position="318"/>
        <end position="346"/>
    </location>
</feature>
<feature type="domain" description="FBD">
    <location>
        <begin position="362"/>
        <end position="409"/>
    </location>
</feature>
<evidence type="ECO:0000255" key="1">
    <source>
        <dbReference type="PROSITE-ProRule" id="PRU00080"/>
    </source>
</evidence>
<evidence type="ECO:0000305" key="2"/>
<reference key="1">
    <citation type="journal article" date="1999" name="Nature">
        <title>Sequence and analysis of chromosome 2 of the plant Arabidopsis thaliana.</title>
        <authorList>
            <person name="Lin X."/>
            <person name="Kaul S."/>
            <person name="Rounsley S.D."/>
            <person name="Shea T.P."/>
            <person name="Benito M.-I."/>
            <person name="Town C.D."/>
            <person name="Fujii C.Y."/>
            <person name="Mason T.M."/>
            <person name="Bowman C.L."/>
            <person name="Barnstead M.E."/>
            <person name="Feldblyum T.V."/>
            <person name="Buell C.R."/>
            <person name="Ketchum K.A."/>
            <person name="Lee J.J."/>
            <person name="Ronning C.M."/>
            <person name="Koo H.L."/>
            <person name="Moffat K.S."/>
            <person name="Cronin L.A."/>
            <person name="Shen M."/>
            <person name="Pai G."/>
            <person name="Van Aken S."/>
            <person name="Umayam L."/>
            <person name="Tallon L.J."/>
            <person name="Gill J.E."/>
            <person name="Adams M.D."/>
            <person name="Carrera A.J."/>
            <person name="Creasy T.H."/>
            <person name="Goodman H.M."/>
            <person name="Somerville C.R."/>
            <person name="Copenhaver G.P."/>
            <person name="Preuss D."/>
            <person name="Nierman W.C."/>
            <person name="White O."/>
            <person name="Eisen J.A."/>
            <person name="Salzberg S.L."/>
            <person name="Fraser C.M."/>
            <person name="Venter J.C."/>
        </authorList>
    </citation>
    <scope>NUCLEOTIDE SEQUENCE [LARGE SCALE GENOMIC DNA]</scope>
    <source>
        <strain>cv. Columbia</strain>
    </source>
</reference>
<reference key="2">
    <citation type="journal article" date="2017" name="Plant J.">
        <title>Araport11: a complete reannotation of the Arabidopsis thaliana reference genome.</title>
        <authorList>
            <person name="Cheng C.Y."/>
            <person name="Krishnakumar V."/>
            <person name="Chan A.P."/>
            <person name="Thibaud-Nissen F."/>
            <person name="Schobel S."/>
            <person name="Town C.D."/>
        </authorList>
    </citation>
    <scope>GENOME REANNOTATION</scope>
    <source>
        <strain>cv. Columbia</strain>
    </source>
</reference>
<reference key="3">
    <citation type="journal article" date="2003" name="Science">
        <title>Empirical analysis of transcriptional activity in the Arabidopsis genome.</title>
        <authorList>
            <person name="Yamada K."/>
            <person name="Lim J."/>
            <person name="Dale J.M."/>
            <person name="Chen H."/>
            <person name="Shinn P."/>
            <person name="Palm C.J."/>
            <person name="Southwick A.M."/>
            <person name="Wu H.C."/>
            <person name="Kim C.J."/>
            <person name="Nguyen M."/>
            <person name="Pham P.K."/>
            <person name="Cheuk R.F."/>
            <person name="Karlin-Newmann G."/>
            <person name="Liu S.X."/>
            <person name="Lam B."/>
            <person name="Sakano H."/>
            <person name="Wu T."/>
            <person name="Yu G."/>
            <person name="Miranda M."/>
            <person name="Quach H.L."/>
            <person name="Tripp M."/>
            <person name="Chang C.H."/>
            <person name="Lee J.M."/>
            <person name="Toriumi M.J."/>
            <person name="Chan M.M."/>
            <person name="Tang C.C."/>
            <person name="Onodera C.S."/>
            <person name="Deng J.M."/>
            <person name="Akiyama K."/>
            <person name="Ansari Y."/>
            <person name="Arakawa T."/>
            <person name="Banh J."/>
            <person name="Banno F."/>
            <person name="Bowser L."/>
            <person name="Brooks S.Y."/>
            <person name="Carninci P."/>
            <person name="Chao Q."/>
            <person name="Choy N."/>
            <person name="Enju A."/>
            <person name="Goldsmith A.D."/>
            <person name="Gurjal M."/>
            <person name="Hansen N.F."/>
            <person name="Hayashizaki Y."/>
            <person name="Johnson-Hopson C."/>
            <person name="Hsuan V.W."/>
            <person name="Iida K."/>
            <person name="Karnes M."/>
            <person name="Khan S."/>
            <person name="Koesema E."/>
            <person name="Ishida J."/>
            <person name="Jiang P.X."/>
            <person name="Jones T."/>
            <person name="Kawai J."/>
            <person name="Kamiya A."/>
            <person name="Meyers C."/>
            <person name="Nakajima M."/>
            <person name="Narusaka M."/>
            <person name="Seki M."/>
            <person name="Sakurai T."/>
            <person name="Satou M."/>
            <person name="Tamse R."/>
            <person name="Vaysberg M."/>
            <person name="Wallender E.K."/>
            <person name="Wong C."/>
            <person name="Yamamura Y."/>
            <person name="Yuan S."/>
            <person name="Shinozaki K."/>
            <person name="Davis R.W."/>
            <person name="Theologis A."/>
            <person name="Ecker J.R."/>
        </authorList>
    </citation>
    <scope>NUCLEOTIDE SEQUENCE [LARGE SCALE MRNA]</scope>
    <source>
        <strain>cv. Columbia</strain>
    </source>
</reference>
<comment type="caution">
    <text evidence="2">Could be the product of a pseudogene.</text>
</comment>
<comment type="sequence caution" evidence="2">
    <conflict type="erroneous gene model prediction">
        <sequence resource="EMBL-CDS" id="AAD29066"/>
    </conflict>
</comment>
<comment type="sequence caution" evidence="2">
    <conflict type="erroneous termination">
        <sequence resource="EMBL-CDS" id="AAD29066"/>
    </conflict>
    <text>Truncated C-terminus.</text>
</comment>
<comment type="sequence caution" evidence="2">
    <conflict type="erroneous termination">
        <sequence resource="EMBL" id="AY080586"/>
    </conflict>
    <text>Truncated C-terminus.</text>
</comment>
<dbReference type="EMBL" id="AC007018">
    <property type="protein sequence ID" value="AAD29066.1"/>
    <property type="status" value="ALT_SEQ"/>
    <property type="molecule type" value="Genomic_DNA"/>
</dbReference>
<dbReference type="EMBL" id="CP002685">
    <property type="status" value="NOT_ANNOTATED_CDS"/>
    <property type="molecule type" value="Genomic_DNA"/>
</dbReference>
<dbReference type="EMBL" id="AY080586">
    <property type="status" value="NOT_ANNOTATED_CDS"/>
    <property type="molecule type" value="mRNA"/>
</dbReference>
<dbReference type="PIR" id="H84466">
    <property type="entry name" value="H84466"/>
</dbReference>
<dbReference type="SMR" id="Q9SJ32"/>
<dbReference type="FunCoup" id="Q9SJ32">
    <property type="interactions" value="5"/>
</dbReference>
<dbReference type="Araport" id="AT2G05300"/>
<dbReference type="TAIR" id="AT2G05300"/>
<dbReference type="InParanoid" id="Q9SJ32"/>
<dbReference type="Proteomes" id="UP000006548">
    <property type="component" value="Chromosome 2"/>
</dbReference>
<dbReference type="ExpressionAtlas" id="Q9SJ32">
    <property type="expression patterns" value="baseline and differential"/>
</dbReference>
<dbReference type="CDD" id="cd22160">
    <property type="entry name" value="F-box_AtFBL13-like"/>
    <property type="match status" value="1"/>
</dbReference>
<dbReference type="Gene3D" id="1.20.1280.50">
    <property type="match status" value="1"/>
</dbReference>
<dbReference type="Gene3D" id="3.80.10.10">
    <property type="entry name" value="Ribonuclease Inhibitor"/>
    <property type="match status" value="1"/>
</dbReference>
<dbReference type="InterPro" id="IPR036047">
    <property type="entry name" value="F-box-like_dom_sf"/>
</dbReference>
<dbReference type="InterPro" id="IPR053781">
    <property type="entry name" value="F-box_AtFBL13-like"/>
</dbReference>
<dbReference type="InterPro" id="IPR001810">
    <property type="entry name" value="F-box_dom"/>
</dbReference>
<dbReference type="InterPro" id="IPR006566">
    <property type="entry name" value="FBD"/>
</dbReference>
<dbReference type="InterPro" id="IPR050232">
    <property type="entry name" value="FBL13/AtMIF1-like"/>
</dbReference>
<dbReference type="InterPro" id="IPR032675">
    <property type="entry name" value="LRR_dom_sf"/>
</dbReference>
<dbReference type="InterPro" id="IPR055411">
    <property type="entry name" value="LRR_FXL15/At3g58940/PEG3-like"/>
</dbReference>
<dbReference type="PANTHER" id="PTHR31900">
    <property type="entry name" value="F-BOX/RNI SUPERFAMILY PROTEIN-RELATED"/>
    <property type="match status" value="1"/>
</dbReference>
<dbReference type="PANTHER" id="PTHR31900:SF25">
    <property type="entry name" value="FBD DOMAIN-CONTAINING PROTEIN"/>
    <property type="match status" value="1"/>
</dbReference>
<dbReference type="Pfam" id="PF00646">
    <property type="entry name" value="F-box"/>
    <property type="match status" value="1"/>
</dbReference>
<dbReference type="Pfam" id="PF08387">
    <property type="entry name" value="FBD"/>
    <property type="match status" value="1"/>
</dbReference>
<dbReference type="Pfam" id="PF24758">
    <property type="entry name" value="LRR_At5g56370"/>
    <property type="match status" value="1"/>
</dbReference>
<dbReference type="SMART" id="SM00579">
    <property type="entry name" value="FBD"/>
    <property type="match status" value="1"/>
</dbReference>
<dbReference type="SUPFAM" id="SSF81383">
    <property type="entry name" value="F-box domain"/>
    <property type="match status" value="1"/>
</dbReference>
<dbReference type="SUPFAM" id="SSF52047">
    <property type="entry name" value="RNI-like"/>
    <property type="match status" value="1"/>
</dbReference>
<dbReference type="PROSITE" id="PS50181">
    <property type="entry name" value="FBOX"/>
    <property type="match status" value="1"/>
</dbReference>
<gene>
    <name type="ordered locus">At2g05300</name>
    <name type="ORF">F5G3.20</name>
</gene>